<evidence type="ECO:0000250" key="1"/>
<evidence type="ECO:0000250" key="2">
    <source>
        <dbReference type="UniProtKB" id="P00157"/>
    </source>
</evidence>
<evidence type="ECO:0000255" key="3">
    <source>
        <dbReference type="PROSITE-ProRule" id="PRU00967"/>
    </source>
</evidence>
<evidence type="ECO:0000255" key="4">
    <source>
        <dbReference type="PROSITE-ProRule" id="PRU00968"/>
    </source>
</evidence>
<evidence type="ECO:0000305" key="5"/>
<feature type="chain" id="PRO_0000061434" description="Cytochrome b">
    <location>
        <begin position="1"/>
        <end position="380"/>
    </location>
</feature>
<feature type="transmembrane region" description="Helical" evidence="2">
    <location>
        <begin position="33"/>
        <end position="53"/>
    </location>
</feature>
<feature type="transmembrane region" description="Helical" evidence="2">
    <location>
        <begin position="77"/>
        <end position="98"/>
    </location>
</feature>
<feature type="transmembrane region" description="Helical" evidence="2">
    <location>
        <begin position="113"/>
        <end position="133"/>
    </location>
</feature>
<feature type="transmembrane region" description="Helical" evidence="2">
    <location>
        <begin position="178"/>
        <end position="198"/>
    </location>
</feature>
<feature type="transmembrane region" description="Helical" evidence="2">
    <location>
        <begin position="226"/>
        <end position="246"/>
    </location>
</feature>
<feature type="transmembrane region" description="Helical" evidence="2">
    <location>
        <begin position="288"/>
        <end position="308"/>
    </location>
</feature>
<feature type="transmembrane region" description="Helical" evidence="2">
    <location>
        <begin position="320"/>
        <end position="340"/>
    </location>
</feature>
<feature type="transmembrane region" description="Helical" evidence="2">
    <location>
        <begin position="347"/>
        <end position="367"/>
    </location>
</feature>
<feature type="binding site" description="axial binding residue" evidence="2">
    <location>
        <position position="83"/>
    </location>
    <ligand>
        <name>heme b</name>
        <dbReference type="ChEBI" id="CHEBI:60344"/>
        <label>b562</label>
    </ligand>
    <ligandPart>
        <name>Fe</name>
        <dbReference type="ChEBI" id="CHEBI:18248"/>
    </ligandPart>
</feature>
<feature type="binding site" description="axial binding residue" evidence="2">
    <location>
        <position position="97"/>
    </location>
    <ligand>
        <name>heme b</name>
        <dbReference type="ChEBI" id="CHEBI:60344"/>
        <label>b566</label>
    </ligand>
    <ligandPart>
        <name>Fe</name>
        <dbReference type="ChEBI" id="CHEBI:18248"/>
    </ligandPart>
</feature>
<feature type="binding site" description="axial binding residue" evidence="2">
    <location>
        <position position="182"/>
    </location>
    <ligand>
        <name>heme b</name>
        <dbReference type="ChEBI" id="CHEBI:60344"/>
        <label>b562</label>
    </ligand>
    <ligandPart>
        <name>Fe</name>
        <dbReference type="ChEBI" id="CHEBI:18248"/>
    </ligandPart>
</feature>
<feature type="binding site" description="axial binding residue" evidence="2">
    <location>
        <position position="196"/>
    </location>
    <ligand>
        <name>heme b</name>
        <dbReference type="ChEBI" id="CHEBI:60344"/>
        <label>b566</label>
    </ligand>
    <ligandPart>
        <name>Fe</name>
        <dbReference type="ChEBI" id="CHEBI:18248"/>
    </ligandPart>
</feature>
<feature type="binding site" evidence="2">
    <location>
        <position position="201"/>
    </location>
    <ligand>
        <name>a ubiquinone</name>
        <dbReference type="ChEBI" id="CHEBI:16389"/>
    </ligand>
</feature>
<feature type="sequence conflict" description="In Ref. 1; AAA98463." evidence="5" ref="1">
    <original>PM</original>
    <variation>ST</variation>
    <location>
        <begin position="3"/>
        <end position="4"/>
    </location>
</feature>
<feature type="sequence conflict" description="In Ref. 1; AAA98463." evidence="5" ref="1">
    <original>T</original>
    <variation>S</variation>
    <location>
        <position position="7"/>
    </location>
</feature>
<feature type="sequence conflict" description="In Ref. 1; AAA98463." evidence="5" ref="1">
    <original>H</original>
    <variation>R</variation>
    <location>
        <position position="16"/>
    </location>
</feature>
<feature type="sequence conflict" description="In Ref. 1; AAA98463." evidence="5" ref="1">
    <original>TI</original>
    <variation>IT</variation>
    <location>
        <begin position="45"/>
        <end position="46"/>
    </location>
</feature>
<feature type="sequence conflict" description="In Ref. 1; AAA98463." evidence="5" ref="1">
    <original>T</original>
    <variation>S</variation>
    <location>
        <position position="60"/>
    </location>
</feature>
<feature type="sequence conflict" description="In Ref. 1; AAA98463." evidence="5" ref="1">
    <original>L</original>
    <variation>F</variation>
    <location>
        <position position="90"/>
    </location>
</feature>
<feature type="sequence conflict" description="In Ref. 1; AAA98463." evidence="5" ref="1">
    <original>I</original>
    <variation>V</variation>
    <location>
        <position position="118"/>
    </location>
</feature>
<feature type="sequence conflict" description="In Ref. 1; AAA98463." evidence="5" ref="1">
    <original>V</original>
    <variation>I</variation>
    <location>
        <position position="153"/>
    </location>
</feature>
<feature type="sequence conflict" description="In Ref. 1; AAA98463." evidence="5" ref="1">
    <original>T</original>
    <variation>S</variation>
    <location>
        <position position="225"/>
    </location>
</feature>
<feature type="sequence conflict" description="In Ref. 1; AAA98463." evidence="5" ref="1">
    <original>T</original>
    <variation>M</variation>
    <location>
        <position position="309"/>
    </location>
</feature>
<feature type="sequence conflict" description="In Ref. 1; AAA98463." evidence="5" ref="1">
    <original>T</original>
    <variation>A</variation>
    <location>
        <position position="330"/>
    </location>
</feature>
<feature type="sequence conflict" description="In Ref. 1; AAA98463." evidence="5" ref="1">
    <original>V</original>
    <variation>I</variation>
    <location>
        <position position="334"/>
    </location>
</feature>
<feature type="sequence conflict" description="In Ref. 1; AAA98463." evidence="5" ref="1">
    <original>G</original>
    <variation>S</variation>
    <location>
        <position position="351"/>
    </location>
</feature>
<feature type="sequence conflict" description="In Ref. 1; AAA98463." evidence="5" ref="1">
    <original>V</original>
    <variation>T</variation>
    <location>
        <position position="356"/>
    </location>
</feature>
<feature type="sequence conflict" description="In Ref. 1; AAA98463." evidence="5" ref="1">
    <original>TS</original>
    <variation>AF</variation>
    <location>
        <begin position="368"/>
        <end position="369"/>
    </location>
</feature>
<feature type="sequence conflict" description="In Ref. 1; AAA98463." evidence="5" ref="1">
    <original>Y</original>
    <variation>H</variation>
    <location>
        <position position="375"/>
    </location>
</feature>
<protein>
    <recommendedName>
        <fullName>Cytochrome b</fullName>
    </recommendedName>
    <alternativeName>
        <fullName>Complex III subunit 3</fullName>
    </alternativeName>
    <alternativeName>
        <fullName>Complex III subunit III</fullName>
    </alternativeName>
    <alternativeName>
        <fullName>Cytochrome b-c1 complex subunit 3</fullName>
    </alternativeName>
    <alternativeName>
        <fullName>Ubiquinol-cytochrome-c reductase complex cytochrome b subunit</fullName>
    </alternativeName>
</protein>
<name>CYB_PONPY</name>
<keyword id="KW-0249">Electron transport</keyword>
<keyword id="KW-0349">Heme</keyword>
<keyword id="KW-0408">Iron</keyword>
<keyword id="KW-0472">Membrane</keyword>
<keyword id="KW-0479">Metal-binding</keyword>
<keyword id="KW-0496">Mitochondrion</keyword>
<keyword id="KW-0999">Mitochondrion inner membrane</keyword>
<keyword id="KW-0679">Respiratory chain</keyword>
<keyword id="KW-0812">Transmembrane</keyword>
<keyword id="KW-1133">Transmembrane helix</keyword>
<keyword id="KW-0813">Transport</keyword>
<keyword id="KW-0830">Ubiquinone</keyword>
<dbReference type="EMBL" id="U38274">
    <property type="protein sequence ID" value="AAA98463.1"/>
    <property type="molecule type" value="Genomic_DNA"/>
</dbReference>
<dbReference type="EMBL" id="D38115">
    <property type="protein sequence ID" value="BAA85293.1"/>
    <property type="molecule type" value="Genomic_DNA"/>
</dbReference>
<dbReference type="EMBL" id="X97717">
    <property type="protein sequence ID" value="CAA66303.1"/>
    <property type="molecule type" value="Genomic_DNA"/>
</dbReference>
<dbReference type="RefSeq" id="NP_008237.1">
    <property type="nucleotide sequence ID" value="NC_001646.1"/>
</dbReference>
<dbReference type="SMR" id="Q35614"/>
<dbReference type="GeneID" id="807904"/>
<dbReference type="KEGG" id="ppyg:807904"/>
<dbReference type="CTD" id="4519"/>
<dbReference type="GO" id="GO:0005743">
    <property type="term" value="C:mitochondrial inner membrane"/>
    <property type="evidence" value="ECO:0007669"/>
    <property type="project" value="UniProtKB-SubCell"/>
</dbReference>
<dbReference type="GO" id="GO:0045275">
    <property type="term" value="C:respiratory chain complex III"/>
    <property type="evidence" value="ECO:0007669"/>
    <property type="project" value="InterPro"/>
</dbReference>
<dbReference type="GO" id="GO:0046872">
    <property type="term" value="F:metal ion binding"/>
    <property type="evidence" value="ECO:0007669"/>
    <property type="project" value="UniProtKB-KW"/>
</dbReference>
<dbReference type="GO" id="GO:0008121">
    <property type="term" value="F:ubiquinol-cytochrome-c reductase activity"/>
    <property type="evidence" value="ECO:0007669"/>
    <property type="project" value="InterPro"/>
</dbReference>
<dbReference type="GO" id="GO:0006122">
    <property type="term" value="P:mitochondrial electron transport, ubiquinol to cytochrome c"/>
    <property type="evidence" value="ECO:0007669"/>
    <property type="project" value="TreeGrafter"/>
</dbReference>
<dbReference type="CDD" id="cd00290">
    <property type="entry name" value="cytochrome_b_C"/>
    <property type="match status" value="1"/>
</dbReference>
<dbReference type="CDD" id="cd00284">
    <property type="entry name" value="Cytochrome_b_N"/>
    <property type="match status" value="1"/>
</dbReference>
<dbReference type="FunFam" id="1.20.810.10:FF:000002">
    <property type="entry name" value="Cytochrome b"/>
    <property type="match status" value="1"/>
</dbReference>
<dbReference type="Gene3D" id="1.20.810.10">
    <property type="entry name" value="Cytochrome Bc1 Complex, Chain C"/>
    <property type="match status" value="1"/>
</dbReference>
<dbReference type="InterPro" id="IPR005798">
    <property type="entry name" value="Cyt_b/b6_C"/>
</dbReference>
<dbReference type="InterPro" id="IPR036150">
    <property type="entry name" value="Cyt_b/b6_C_sf"/>
</dbReference>
<dbReference type="InterPro" id="IPR005797">
    <property type="entry name" value="Cyt_b/b6_N"/>
</dbReference>
<dbReference type="InterPro" id="IPR027387">
    <property type="entry name" value="Cytb/b6-like_sf"/>
</dbReference>
<dbReference type="InterPro" id="IPR030689">
    <property type="entry name" value="Cytochrome_b"/>
</dbReference>
<dbReference type="InterPro" id="IPR048260">
    <property type="entry name" value="Cytochrome_b_C_euk/bac"/>
</dbReference>
<dbReference type="InterPro" id="IPR048259">
    <property type="entry name" value="Cytochrome_b_N_euk/bac"/>
</dbReference>
<dbReference type="InterPro" id="IPR016174">
    <property type="entry name" value="Di-haem_cyt_TM"/>
</dbReference>
<dbReference type="PANTHER" id="PTHR19271">
    <property type="entry name" value="CYTOCHROME B"/>
    <property type="match status" value="1"/>
</dbReference>
<dbReference type="PANTHER" id="PTHR19271:SF16">
    <property type="entry name" value="CYTOCHROME B"/>
    <property type="match status" value="1"/>
</dbReference>
<dbReference type="Pfam" id="PF00032">
    <property type="entry name" value="Cytochrom_B_C"/>
    <property type="match status" value="1"/>
</dbReference>
<dbReference type="Pfam" id="PF00033">
    <property type="entry name" value="Cytochrome_B"/>
    <property type="match status" value="1"/>
</dbReference>
<dbReference type="PIRSF" id="PIRSF038885">
    <property type="entry name" value="COB"/>
    <property type="match status" value="1"/>
</dbReference>
<dbReference type="SUPFAM" id="SSF81648">
    <property type="entry name" value="a domain/subunit of cytochrome bc1 complex (Ubiquinol-cytochrome c reductase)"/>
    <property type="match status" value="1"/>
</dbReference>
<dbReference type="SUPFAM" id="SSF81342">
    <property type="entry name" value="Transmembrane di-heme cytochromes"/>
    <property type="match status" value="1"/>
</dbReference>
<dbReference type="PROSITE" id="PS51003">
    <property type="entry name" value="CYTB_CTER"/>
    <property type="match status" value="1"/>
</dbReference>
<dbReference type="PROSITE" id="PS51002">
    <property type="entry name" value="CYTB_NTER"/>
    <property type="match status" value="1"/>
</dbReference>
<organism>
    <name type="scientific">Pongo pygmaeus</name>
    <name type="common">Bornean orangutan</name>
    <dbReference type="NCBI Taxonomy" id="9600"/>
    <lineage>
        <taxon>Eukaryota</taxon>
        <taxon>Metazoa</taxon>
        <taxon>Chordata</taxon>
        <taxon>Craniata</taxon>
        <taxon>Vertebrata</taxon>
        <taxon>Euteleostomi</taxon>
        <taxon>Mammalia</taxon>
        <taxon>Eutheria</taxon>
        <taxon>Euarchontoglires</taxon>
        <taxon>Primates</taxon>
        <taxon>Haplorrhini</taxon>
        <taxon>Catarrhini</taxon>
        <taxon>Hominidae</taxon>
        <taxon>Pongo</taxon>
    </lineage>
</organism>
<accession>Q35614</accession>
<accession>P92723</accession>
<accession>Q7GIM5</accession>
<sequence>MTPMRKTNPLMKLINHSLIDLPTPSNISAWWNFGSLLGACLIIQTITGLFLAMHYSPDATTAFSSIAHITRDVNYGWMIRHLHANGASMLFICLFLHIGRGLYYGSFTHLETWNIGIILLFMTMMTAFMGYVLPWGQMSFWGATVITNLLSAVPYIGTDLVQWVWGGYSVNSPTLTRFFTLHFMLPFIITALTTLHLLFLHETGSNNPLGIPSHSDKITFHPYYTIKDILGLLLFLLALMTLTLLSPDLLSDPDNYTLANPLSTPPHIKPEWYFLFAYAILRSVPNKLGGVMALMLSILILTTIPALHTSKQQSMTFRPLSQFLYWLLITDLLVLTWIGGQPVSYPFITIGQVASVLYFTTILLLMPTSSLIENYMLKWT</sequence>
<geneLocation type="mitochondrion"/>
<proteinExistence type="inferred from homology"/>
<reference key="1">
    <citation type="journal article" date="1995" name="Nature">
        <title>Insertions and duplications of mtDNA in the nuclear genomes of Old World monkeys and hominoids.</title>
        <authorList>
            <person name="Collura R.V."/>
            <person name="Stewart C.-B.R."/>
        </authorList>
    </citation>
    <scope>NUCLEOTIDE SEQUENCE [GENOMIC DNA]</scope>
    <source>
        <tissue>Blood</tissue>
    </source>
</reference>
<reference key="2">
    <citation type="journal article" date="1995" name="Proc. Natl. Acad. Sci. U.S.A.">
        <title>Recent African origin of modern humans revealed by complete sequences of hominoid mitochondrial DNAs.</title>
        <authorList>
            <person name="Horai S."/>
            <person name="Hayasaka K."/>
            <person name="Kondo R."/>
            <person name="Tsugane K."/>
            <person name="Takahata N."/>
        </authorList>
    </citation>
    <scope>NUCLEOTIDE SEQUENCE [GENOMIC DNA]</scope>
</reference>
<reference key="3">
    <citation type="journal article" date="1996" name="J. Mol. Evol.">
        <title>The mitochondrial DNA molecule of Sumatran orangutan and a molecular proposal for two (Bornean and Sumatran) species of orangutan.</title>
        <authorList>
            <person name="Xu X."/>
            <person name="Arnason U."/>
        </authorList>
    </citation>
    <scope>NUCLEOTIDE SEQUENCE [GENOMIC DNA]</scope>
    <source>
        <strain>Isolate Anna</strain>
    </source>
</reference>
<gene>
    <name type="primary">MT-CYB</name>
    <name type="synonym">COB</name>
    <name type="synonym">CYTB</name>
    <name type="synonym">MTCYB</name>
</gene>
<comment type="function">
    <text evidence="2">Component of the ubiquinol-cytochrome c reductase complex (complex III or cytochrome b-c1 complex) that is part of the mitochondrial respiratory chain. The b-c1 complex mediates electron transfer from ubiquinol to cytochrome c. Contributes to the generation of a proton gradient across the mitochondrial membrane that is then used for ATP synthesis.</text>
</comment>
<comment type="cofactor">
    <cofactor evidence="2">
        <name>heme b</name>
        <dbReference type="ChEBI" id="CHEBI:60344"/>
    </cofactor>
    <text evidence="2">Binds 2 heme b groups non-covalently.</text>
</comment>
<comment type="subunit">
    <text evidence="2">The cytochrome bc1 complex contains 11 subunits: 3 respiratory subunits (MT-CYB, CYC1 and UQCRFS1), 2 core proteins (UQCRC1 and UQCRC2) and 6 low-molecular weight proteins (UQCRH/QCR6, UQCRB/QCR7, UQCRQ/QCR8, UQCR10/QCR9, UQCR11/QCR10 and a cleavage product of UQCRFS1). This cytochrome bc1 complex then forms a dimer.</text>
</comment>
<comment type="subcellular location">
    <subcellularLocation>
        <location evidence="2">Mitochondrion inner membrane</location>
        <topology evidence="2">Multi-pass membrane protein</topology>
    </subcellularLocation>
</comment>
<comment type="miscellaneous">
    <text evidence="1">Heme 1 (or BL or b562) is low-potential and absorbs at about 562 nm, and heme 2 (or BH or b566) is high-potential and absorbs at about 566 nm.</text>
</comment>
<comment type="similarity">
    <text evidence="3 4">Belongs to the cytochrome b family.</text>
</comment>
<comment type="caution">
    <text evidence="2">The full-length protein contains only eight transmembrane helices, not nine as predicted by bioinformatics tools.</text>
</comment>